<name>VE2_HPV09</name>
<accession>P36780</accession>
<comment type="function">
    <text evidence="1">Plays a role in the initiation of viral DNA replication. A dimer of E2 interacts with a dimer of E1 in order to improve specificity of E1 DNA binding activity. Once the complex recognizes and binds DNA at specific sites, the E2 dimer is removed from DNA. E2 also regulates viral transcription through binding to the E2RE response element (5'-ACCNNNNNNGGT-3') present in multiple copies in the regulatory regions of the viral genome. Activates or represses transcription depending on E2RE's position with regards to proximal promoter elements including the TATA-box. Repression occurs by sterically hindering the assembly of the transcription initiation complex.</text>
</comment>
<comment type="subunit">
    <text evidence="1">Binds DNA as homodimer. Interacts with protein E1; this interaction greatly increases E1 DNA-binding activity. Interacts with protein L1; this interaction enhances E2-dependent replication and transcription activation. Interacts with protein L2; this interaction inhibits E2 transcriptional activity but not DNA replication function E2. Interacts with protein E7; this interaction inhibits E7 oncogenic activity. Interacts with host TAF1; this interaction modulates E2-dependent transcriptional regulation. Interacts with host BRD4; this interaction mediates E2 transcriptional activation function. Additionally, the interaction with host BRD4 on mitotic chromosomes mediates tethering of the viral genome. Interacts with host TOPBP1; this interaction is required for optimal viral DNA replication.</text>
</comment>
<comment type="subcellular location">
    <subcellularLocation>
        <location evidence="1">Host nucleus</location>
    </subcellularLocation>
</comment>
<comment type="PTM">
    <text evidence="1">Phosphorylated.</text>
</comment>
<comment type="similarity">
    <text evidence="1">Belongs to the papillomaviridae E2 protein family.</text>
</comment>
<reference key="1">
    <citation type="journal article" date="1994" name="Curr. Top. Microbiol. Immunol.">
        <title>Primer-directed sequencing of human papillomavirus types.</title>
        <authorList>
            <person name="Delius H."/>
            <person name="Hofmann B."/>
        </authorList>
    </citation>
    <scope>NUCLEOTIDE SEQUENCE [GENOMIC DNA]</scope>
</reference>
<sequence length="461" mass="52141">METLSARFNALQETLMDLYESGREDLQSQIDHWQTLRQEQILLHYARKNGVMRLGYQPVPPLATSEQKAKDAIGMVLLLQSLQRSAYGQEPWTLAQTSLEAVRSPPAYAFKKGPQNIEVVYDGDPDNVMSYTIWNFIYYQTVNDTWEKVQGHVDYFGAYYFEGTVKTYYINFDKDAARYGRTGVWEVHVNKDIVFAPVTSSSPPTGDGGETSKHTLSRSGSPTTSRLPATTVPTGGSRTSSRRYQRKASSPTTRKKRQRQGEGEGEGEGEETNYRRQRSRSKGRTETERGGERRRRGRSSSADSTTPTDRRRGRGGGRGPTTRSQSRSRSRSHSRSRSRGGTASRVGVSPDEVGTRVRSVGAGHHGRLARLLAEAKDPPLMLLRGDANVLKCYRFRERKKKRGLVKYYSTTWSWVGEDSCDRVGRARMILAFDTYEHRQQFIRTMKLPPTVDWSLGNVDDL</sequence>
<gene>
    <name evidence="1" type="primary">E2</name>
</gene>
<protein>
    <recommendedName>
        <fullName evidence="1">Regulatory protein E2</fullName>
    </recommendedName>
</protein>
<organism>
    <name type="scientific">Human papillomavirus 9</name>
    <dbReference type="NCBI Taxonomy" id="10621"/>
    <lineage>
        <taxon>Viruses</taxon>
        <taxon>Monodnaviria</taxon>
        <taxon>Shotokuvirae</taxon>
        <taxon>Cossaviricota</taxon>
        <taxon>Papovaviricetes</taxon>
        <taxon>Zurhausenvirales</taxon>
        <taxon>Papillomaviridae</taxon>
        <taxon>Firstpapillomavirinae</taxon>
        <taxon>Betapapillomavirus</taxon>
        <taxon>Betapapillomavirus 2</taxon>
    </lineage>
</organism>
<proteinExistence type="inferred from homology"/>
<organismHost>
    <name type="scientific">Homo sapiens</name>
    <name type="common">Human</name>
    <dbReference type="NCBI Taxonomy" id="9606"/>
</organismHost>
<keyword id="KW-0010">Activator</keyword>
<keyword id="KW-0235">DNA replication</keyword>
<keyword id="KW-0238">DNA-binding</keyword>
<keyword id="KW-0244">Early protein</keyword>
<keyword id="KW-1048">Host nucleus</keyword>
<keyword id="KW-0597">Phosphoprotein</keyword>
<keyword id="KW-1185">Reference proteome</keyword>
<keyword id="KW-0678">Repressor</keyword>
<keyword id="KW-0804">Transcription</keyword>
<keyword id="KW-0805">Transcription regulation</keyword>
<dbReference type="EMBL" id="X74464">
    <property type="protein sequence ID" value="CAA52486.1"/>
    <property type="molecule type" value="Genomic_DNA"/>
</dbReference>
<dbReference type="PIR" id="S36593">
    <property type="entry name" value="S36593"/>
</dbReference>
<dbReference type="RefSeq" id="NP_041864.1">
    <property type="nucleotide sequence ID" value="NC_001596.1"/>
</dbReference>
<dbReference type="SMR" id="P36780"/>
<dbReference type="BioGRID" id="3509186">
    <property type="interactions" value="9"/>
</dbReference>
<dbReference type="IntAct" id="P36780">
    <property type="interactions" value="89"/>
</dbReference>
<dbReference type="MINT" id="P36780"/>
<dbReference type="DNASU" id="1489479"/>
<dbReference type="GeneID" id="1489479"/>
<dbReference type="KEGG" id="vg:1489479"/>
<dbReference type="OrthoDB" id="15886at10239"/>
<dbReference type="Proteomes" id="UP000009104">
    <property type="component" value="Genome"/>
</dbReference>
<dbReference type="GO" id="GO:0042025">
    <property type="term" value="C:host cell nucleus"/>
    <property type="evidence" value="ECO:0007669"/>
    <property type="project" value="UniProtKB-SubCell"/>
</dbReference>
<dbReference type="GO" id="GO:0003677">
    <property type="term" value="F:DNA binding"/>
    <property type="evidence" value="ECO:0007669"/>
    <property type="project" value="UniProtKB-UniRule"/>
</dbReference>
<dbReference type="GO" id="GO:0003700">
    <property type="term" value="F:DNA-binding transcription factor activity"/>
    <property type="evidence" value="ECO:0007669"/>
    <property type="project" value="UniProtKB-UniRule"/>
</dbReference>
<dbReference type="GO" id="GO:0000166">
    <property type="term" value="F:nucleotide binding"/>
    <property type="evidence" value="ECO:0007669"/>
    <property type="project" value="UniProtKB-UniRule"/>
</dbReference>
<dbReference type="GO" id="GO:0006260">
    <property type="term" value="P:DNA replication"/>
    <property type="evidence" value="ECO:0007669"/>
    <property type="project" value="UniProtKB-KW"/>
</dbReference>
<dbReference type="GO" id="GO:0006351">
    <property type="term" value="P:DNA-templated transcription"/>
    <property type="evidence" value="ECO:0007669"/>
    <property type="project" value="UniProtKB-UniRule"/>
</dbReference>
<dbReference type="GO" id="GO:0006275">
    <property type="term" value="P:regulation of DNA replication"/>
    <property type="evidence" value="ECO:0007669"/>
    <property type="project" value="UniProtKB-UniRule"/>
</dbReference>
<dbReference type="GO" id="GO:0039693">
    <property type="term" value="P:viral DNA genome replication"/>
    <property type="evidence" value="ECO:0007669"/>
    <property type="project" value="UniProtKB-UniRule"/>
</dbReference>
<dbReference type="Gene3D" id="3.30.70.330">
    <property type="match status" value="1"/>
</dbReference>
<dbReference type="Gene3D" id="1.10.287.30">
    <property type="entry name" value="E2 (early) protein, N terminal domain, subdomain 1"/>
    <property type="match status" value="1"/>
</dbReference>
<dbReference type="Gene3D" id="2.170.200.10">
    <property type="entry name" value="Papillomavirus E2 early protein domain"/>
    <property type="match status" value="1"/>
</dbReference>
<dbReference type="HAMAP" id="MF_04001">
    <property type="entry name" value="PPV_E2"/>
    <property type="match status" value="1"/>
</dbReference>
<dbReference type="InterPro" id="IPR035975">
    <property type="entry name" value="E2/EBNA1_C_sf"/>
</dbReference>
<dbReference type="InterPro" id="IPR012677">
    <property type="entry name" value="Nucleotide-bd_a/b_plait_sf"/>
</dbReference>
<dbReference type="InterPro" id="IPR000427">
    <property type="entry name" value="Papillomavirus_E2_C"/>
</dbReference>
<dbReference type="InterPro" id="IPR001866">
    <property type="entry name" value="PPV_E2_N"/>
</dbReference>
<dbReference type="InterPro" id="IPR033668">
    <property type="entry name" value="Reg_prot_E2"/>
</dbReference>
<dbReference type="InterPro" id="IPR036050">
    <property type="entry name" value="Regulatory_protein_E2_N"/>
</dbReference>
<dbReference type="InterPro" id="IPR042503">
    <property type="entry name" value="Regulatory_protein_E2_N_1"/>
</dbReference>
<dbReference type="InterPro" id="IPR042504">
    <property type="entry name" value="Regulatory_protein_E2_N_2"/>
</dbReference>
<dbReference type="Pfam" id="PF00511">
    <property type="entry name" value="PPV_E2_C"/>
    <property type="match status" value="1"/>
</dbReference>
<dbReference type="Pfam" id="PF00508">
    <property type="entry name" value="PPV_E2_N"/>
    <property type="match status" value="1"/>
</dbReference>
<dbReference type="SUPFAM" id="SSF51332">
    <property type="entry name" value="E2 regulatory, transactivation domain"/>
    <property type="match status" value="1"/>
</dbReference>
<dbReference type="SUPFAM" id="SSF54957">
    <property type="entry name" value="Viral DNA-binding domain"/>
    <property type="match status" value="1"/>
</dbReference>
<feature type="chain" id="PRO_0000133188" description="Regulatory protein E2">
    <location>
        <begin position="1"/>
        <end position="461"/>
    </location>
</feature>
<feature type="region of interest" description="Transactivation domain" evidence="1">
    <location>
        <begin position="1"/>
        <end position="201"/>
    </location>
</feature>
<feature type="region of interest" description="Disordered" evidence="2">
    <location>
        <begin position="197"/>
        <end position="364"/>
    </location>
</feature>
<feature type="region of interest" description="DNA-binding domain" evidence="1">
    <location>
        <begin position="377"/>
        <end position="461"/>
    </location>
</feature>
<feature type="compositionally biased region" description="Polar residues" evidence="2">
    <location>
        <begin position="217"/>
        <end position="239"/>
    </location>
</feature>
<feature type="compositionally biased region" description="Basic residues" evidence="2">
    <location>
        <begin position="326"/>
        <end position="338"/>
    </location>
</feature>
<feature type="compositionally biased region" description="Low complexity" evidence="2">
    <location>
        <begin position="339"/>
        <end position="349"/>
    </location>
</feature>
<evidence type="ECO:0000255" key="1">
    <source>
        <dbReference type="HAMAP-Rule" id="MF_04001"/>
    </source>
</evidence>
<evidence type="ECO:0000256" key="2">
    <source>
        <dbReference type="SAM" id="MobiDB-lite"/>
    </source>
</evidence>